<gene>
    <name evidence="1" type="primary">rps13</name>
</gene>
<reference key="1">
    <citation type="journal article" date="2007" name="Mol. Genet. Genomics">
        <title>Chloroplast genomes of the diatoms Phaeodactylum tricornutum and Thalassiosira pseudonana: comparison with other plastid genomes of the red lineage.</title>
        <authorList>
            <person name="Oudot-Le Secq M.-P."/>
            <person name="Grimwood J."/>
            <person name="Shapiro H."/>
            <person name="Armbrust E.V."/>
            <person name="Bowler C."/>
            <person name="Green B.R."/>
        </authorList>
    </citation>
    <scope>NUCLEOTIDE SEQUENCE [LARGE SCALE GENOMIC DNA]</scope>
    <source>
        <strain>CCAP 1055/1</strain>
    </source>
</reference>
<comment type="function">
    <text evidence="1">Located at the top of the head of the 30S subunit, it contacts several helices of the 16S rRNA.</text>
</comment>
<comment type="subunit">
    <text>Part of the 30S ribosomal subunit.</text>
</comment>
<comment type="subcellular location">
    <subcellularLocation>
        <location>Plastid</location>
        <location>Chloroplast</location>
    </subcellularLocation>
</comment>
<comment type="similarity">
    <text evidence="1">Belongs to the universal ribosomal protein uS13 family.</text>
</comment>
<name>RR13_PHATC</name>
<keyword id="KW-0150">Chloroplast</keyword>
<keyword id="KW-0934">Plastid</keyword>
<keyword id="KW-1185">Reference proteome</keyword>
<keyword id="KW-0687">Ribonucleoprotein</keyword>
<keyword id="KW-0689">Ribosomal protein</keyword>
<keyword id="KW-0694">RNA-binding</keyword>
<keyword id="KW-0699">rRNA-binding</keyword>
<geneLocation type="chloroplast"/>
<dbReference type="EMBL" id="EF067920">
    <property type="protein sequence ID" value="ABK20696.1"/>
    <property type="molecule type" value="Genomic_DNA"/>
</dbReference>
<dbReference type="RefSeq" id="YP_874473.1">
    <property type="nucleotide sequence ID" value="NC_008588.1"/>
</dbReference>
<dbReference type="SMR" id="A0T0J8"/>
<dbReference type="STRING" id="556484.A0T0J8"/>
<dbReference type="GeneID" id="4524648"/>
<dbReference type="InParanoid" id="A0T0J8"/>
<dbReference type="Proteomes" id="UP000000759">
    <property type="component" value="Chloroplast"/>
</dbReference>
<dbReference type="GO" id="GO:0009507">
    <property type="term" value="C:chloroplast"/>
    <property type="evidence" value="ECO:0007669"/>
    <property type="project" value="UniProtKB-SubCell"/>
</dbReference>
<dbReference type="GO" id="GO:0005739">
    <property type="term" value="C:mitochondrion"/>
    <property type="evidence" value="ECO:0007669"/>
    <property type="project" value="TreeGrafter"/>
</dbReference>
<dbReference type="GO" id="GO:0015935">
    <property type="term" value="C:small ribosomal subunit"/>
    <property type="evidence" value="ECO:0007669"/>
    <property type="project" value="TreeGrafter"/>
</dbReference>
<dbReference type="GO" id="GO:0019843">
    <property type="term" value="F:rRNA binding"/>
    <property type="evidence" value="ECO:0007669"/>
    <property type="project" value="UniProtKB-UniRule"/>
</dbReference>
<dbReference type="GO" id="GO:0003735">
    <property type="term" value="F:structural constituent of ribosome"/>
    <property type="evidence" value="ECO:0007669"/>
    <property type="project" value="InterPro"/>
</dbReference>
<dbReference type="GO" id="GO:0006412">
    <property type="term" value="P:translation"/>
    <property type="evidence" value="ECO:0007669"/>
    <property type="project" value="UniProtKB-UniRule"/>
</dbReference>
<dbReference type="FunFam" id="1.10.8.50:FF:000001">
    <property type="entry name" value="30S ribosomal protein S13"/>
    <property type="match status" value="1"/>
</dbReference>
<dbReference type="FunFam" id="4.10.910.10:FF:000005">
    <property type="entry name" value="30S ribosomal protein S13, chloroplastic"/>
    <property type="match status" value="1"/>
</dbReference>
<dbReference type="Gene3D" id="1.10.8.50">
    <property type="match status" value="1"/>
</dbReference>
<dbReference type="Gene3D" id="4.10.910.10">
    <property type="entry name" value="30s ribosomal protein s13, domain 2"/>
    <property type="match status" value="1"/>
</dbReference>
<dbReference type="HAMAP" id="MF_01315">
    <property type="entry name" value="Ribosomal_uS13"/>
    <property type="match status" value="1"/>
</dbReference>
<dbReference type="InterPro" id="IPR027437">
    <property type="entry name" value="Rbsml_uS13_C"/>
</dbReference>
<dbReference type="InterPro" id="IPR001892">
    <property type="entry name" value="Ribosomal_uS13"/>
</dbReference>
<dbReference type="InterPro" id="IPR010979">
    <property type="entry name" value="Ribosomal_uS13-like_H2TH"/>
</dbReference>
<dbReference type="InterPro" id="IPR019980">
    <property type="entry name" value="Ribosomal_uS13_bac-type"/>
</dbReference>
<dbReference type="InterPro" id="IPR018269">
    <property type="entry name" value="Ribosomal_uS13_CS"/>
</dbReference>
<dbReference type="NCBIfam" id="TIGR03631">
    <property type="entry name" value="uS13_bact"/>
    <property type="match status" value="1"/>
</dbReference>
<dbReference type="PANTHER" id="PTHR10871">
    <property type="entry name" value="30S RIBOSOMAL PROTEIN S13/40S RIBOSOMAL PROTEIN S18"/>
    <property type="match status" value="1"/>
</dbReference>
<dbReference type="PANTHER" id="PTHR10871:SF1">
    <property type="entry name" value="SMALL RIBOSOMAL SUBUNIT PROTEIN US13M"/>
    <property type="match status" value="1"/>
</dbReference>
<dbReference type="Pfam" id="PF00416">
    <property type="entry name" value="Ribosomal_S13"/>
    <property type="match status" value="1"/>
</dbReference>
<dbReference type="PIRSF" id="PIRSF002134">
    <property type="entry name" value="Ribosomal_S13"/>
    <property type="match status" value="1"/>
</dbReference>
<dbReference type="SUPFAM" id="SSF46946">
    <property type="entry name" value="S13-like H2TH domain"/>
    <property type="match status" value="1"/>
</dbReference>
<dbReference type="PROSITE" id="PS00646">
    <property type="entry name" value="RIBOSOMAL_S13_1"/>
    <property type="match status" value="1"/>
</dbReference>
<dbReference type="PROSITE" id="PS50159">
    <property type="entry name" value="RIBOSOMAL_S13_2"/>
    <property type="match status" value="1"/>
</dbReference>
<sequence length="123" mass="14097">MVRLVGVDLPRNKRIAYALTYIHGIGLTSARKIIEIANINPETRTVDLTTEETVALRQTLEESDLKLEGDLRRFNGLNIKRLNEINCHRGKRHRNNLPVRGQRTRTNARSRRGSKKTVTGKKK</sequence>
<evidence type="ECO:0000255" key="1">
    <source>
        <dbReference type="HAMAP-Rule" id="MF_01315"/>
    </source>
</evidence>
<evidence type="ECO:0000256" key="2">
    <source>
        <dbReference type="SAM" id="MobiDB-lite"/>
    </source>
</evidence>
<evidence type="ECO:0000305" key="3"/>
<organism>
    <name type="scientific">Phaeodactylum tricornutum (strain CCAP 1055/1)</name>
    <dbReference type="NCBI Taxonomy" id="556484"/>
    <lineage>
        <taxon>Eukaryota</taxon>
        <taxon>Sar</taxon>
        <taxon>Stramenopiles</taxon>
        <taxon>Ochrophyta</taxon>
        <taxon>Bacillariophyta</taxon>
        <taxon>Bacillariophyceae</taxon>
        <taxon>Bacillariophycidae</taxon>
        <taxon>Naviculales</taxon>
        <taxon>Phaeodactylaceae</taxon>
        <taxon>Phaeodactylum</taxon>
    </lineage>
</organism>
<proteinExistence type="inferred from homology"/>
<feature type="chain" id="PRO_0000276664" description="Small ribosomal subunit protein uS13c">
    <location>
        <begin position="1"/>
        <end position="123"/>
    </location>
</feature>
<feature type="region of interest" description="Disordered" evidence="2">
    <location>
        <begin position="89"/>
        <end position="123"/>
    </location>
</feature>
<feature type="compositionally biased region" description="Basic residues" evidence="2">
    <location>
        <begin position="102"/>
        <end position="123"/>
    </location>
</feature>
<protein>
    <recommendedName>
        <fullName evidence="1">Small ribosomal subunit protein uS13c</fullName>
    </recommendedName>
    <alternativeName>
        <fullName evidence="3">30S ribosomal protein S13, chloroplastic</fullName>
    </alternativeName>
</protein>
<accession>A0T0J8</accession>